<reference key="1">
    <citation type="journal article" date="2009" name="J. Bacteriol.">
        <title>Complete genome sequence of the extremophilic Bacillus cereus strain Q1 with industrial applications.</title>
        <authorList>
            <person name="Xiong Z."/>
            <person name="Jiang Y."/>
            <person name="Qi D."/>
            <person name="Lu H."/>
            <person name="Yang F."/>
            <person name="Yang J."/>
            <person name="Chen L."/>
            <person name="Sun L."/>
            <person name="Xu X."/>
            <person name="Xue Y."/>
            <person name="Zhu Y."/>
            <person name="Jin Q."/>
        </authorList>
    </citation>
    <scope>NUCLEOTIDE SEQUENCE [LARGE SCALE GENOMIC DNA]</scope>
    <source>
        <strain>Q1</strain>
    </source>
</reference>
<sequence>MKQILFMDTTLRDGEQSPGVNLNEQEKLQIARQLERLGIHVMEAGFAAASEGDFQSVKRIANTIQNATVMSLARAKESDIRRAYEAVKGAVSPRLHVFLATSDIHMKYKLCMSKEDVLDSIHRSVTLGKSLFPTVQFSAEDATRTARDFLAEAVEVAIRAGANVINIPDTVGYTNPEEYYSLFKYLQESVPSYEKAIFSCHCHDDLGMAVANSLAAVEGGALQVEGTINGIGERAGNAALEEVAVALHIRKDFYQAEPSMTLKEIKATSTLVSRLTGMVVPKNKAIVGANAFAHESGIHQDGVLKEVTTYEIIEPELVGESQNLFVLGKHSGRHAFTEKMKELGYEFTTEERDAVFEAFKKLADRKKEITEEDLRALMLGEAAFAAQQYNITQLQVHFVSNSTQCATVVLKDEEGNVFEDAATGSGSIEAIYNAIQRILGLECELADYRIQSITQGQDALAHVHVELKEGTHQVSGFGVAQDVLEASARAYVHAAGKLKSFIQLVK</sequence>
<protein>
    <recommendedName>
        <fullName evidence="1">2-isopropylmalate synthase</fullName>
        <ecNumber evidence="1">2.3.3.13</ecNumber>
    </recommendedName>
    <alternativeName>
        <fullName evidence="1">Alpha-IPM synthase</fullName>
    </alternativeName>
    <alternativeName>
        <fullName evidence="1">Alpha-isopropylmalate synthase</fullName>
    </alternativeName>
</protein>
<gene>
    <name evidence="1" type="primary">leuA</name>
    <name type="ordered locus">BCQ_1473</name>
</gene>
<organism>
    <name type="scientific">Bacillus cereus (strain Q1)</name>
    <dbReference type="NCBI Taxonomy" id="361100"/>
    <lineage>
        <taxon>Bacteria</taxon>
        <taxon>Bacillati</taxon>
        <taxon>Bacillota</taxon>
        <taxon>Bacilli</taxon>
        <taxon>Bacillales</taxon>
        <taxon>Bacillaceae</taxon>
        <taxon>Bacillus</taxon>
        <taxon>Bacillus cereus group</taxon>
    </lineage>
</organism>
<comment type="function">
    <text evidence="1">Catalyzes the condensation of the acetyl group of acetyl-CoA with 3-methyl-2-oxobutanoate (2-ketoisovalerate) to form 3-carboxy-3-hydroxy-4-methylpentanoate (2-isopropylmalate).</text>
</comment>
<comment type="catalytic activity">
    <reaction evidence="1">
        <text>3-methyl-2-oxobutanoate + acetyl-CoA + H2O = (2S)-2-isopropylmalate + CoA + H(+)</text>
        <dbReference type="Rhea" id="RHEA:21524"/>
        <dbReference type="ChEBI" id="CHEBI:1178"/>
        <dbReference type="ChEBI" id="CHEBI:11851"/>
        <dbReference type="ChEBI" id="CHEBI:15377"/>
        <dbReference type="ChEBI" id="CHEBI:15378"/>
        <dbReference type="ChEBI" id="CHEBI:57287"/>
        <dbReference type="ChEBI" id="CHEBI:57288"/>
        <dbReference type="EC" id="2.3.3.13"/>
    </reaction>
</comment>
<comment type="cofactor">
    <cofactor evidence="1">
        <name>Mn(2+)</name>
        <dbReference type="ChEBI" id="CHEBI:29035"/>
    </cofactor>
</comment>
<comment type="pathway">
    <text evidence="1">Amino-acid biosynthesis; L-leucine biosynthesis; L-leucine from 3-methyl-2-oxobutanoate: step 1/4.</text>
</comment>
<comment type="subunit">
    <text evidence="1">Homodimer.</text>
</comment>
<comment type="subcellular location">
    <subcellularLocation>
        <location evidence="1">Cytoplasm</location>
    </subcellularLocation>
</comment>
<comment type="similarity">
    <text evidence="1">Belongs to the alpha-IPM synthase/homocitrate synthase family. LeuA type 1 subfamily.</text>
</comment>
<proteinExistence type="inferred from homology"/>
<name>LEU1_BACCQ</name>
<dbReference type="EC" id="2.3.3.13" evidence="1"/>
<dbReference type="EMBL" id="CP000227">
    <property type="protein sequence ID" value="ACM11901.1"/>
    <property type="molecule type" value="Genomic_DNA"/>
</dbReference>
<dbReference type="SMR" id="B9IUZ0"/>
<dbReference type="KEGG" id="bcq:BCQ_1473"/>
<dbReference type="HOGENOM" id="CLU_022158_0_1_9"/>
<dbReference type="UniPathway" id="UPA00048">
    <property type="reaction ID" value="UER00070"/>
</dbReference>
<dbReference type="Proteomes" id="UP000000441">
    <property type="component" value="Chromosome"/>
</dbReference>
<dbReference type="GO" id="GO:0005737">
    <property type="term" value="C:cytoplasm"/>
    <property type="evidence" value="ECO:0007669"/>
    <property type="project" value="UniProtKB-SubCell"/>
</dbReference>
<dbReference type="GO" id="GO:0003852">
    <property type="term" value="F:2-isopropylmalate synthase activity"/>
    <property type="evidence" value="ECO:0007669"/>
    <property type="project" value="UniProtKB-UniRule"/>
</dbReference>
<dbReference type="GO" id="GO:0003985">
    <property type="term" value="F:acetyl-CoA C-acetyltransferase activity"/>
    <property type="evidence" value="ECO:0007669"/>
    <property type="project" value="UniProtKB-UniRule"/>
</dbReference>
<dbReference type="GO" id="GO:0030145">
    <property type="term" value="F:manganese ion binding"/>
    <property type="evidence" value="ECO:0007669"/>
    <property type="project" value="UniProtKB-UniRule"/>
</dbReference>
<dbReference type="GO" id="GO:0009098">
    <property type="term" value="P:L-leucine biosynthetic process"/>
    <property type="evidence" value="ECO:0007669"/>
    <property type="project" value="UniProtKB-UniRule"/>
</dbReference>
<dbReference type="CDD" id="cd07940">
    <property type="entry name" value="DRE_TIM_IPMS"/>
    <property type="match status" value="1"/>
</dbReference>
<dbReference type="FunFam" id="3.20.20.70:FF:000287">
    <property type="entry name" value="2-isopropylmalate synthase"/>
    <property type="match status" value="1"/>
</dbReference>
<dbReference type="FunFam" id="3.30.160.270:FF:000003">
    <property type="entry name" value="2-isopropylmalate synthase"/>
    <property type="match status" value="1"/>
</dbReference>
<dbReference type="Gene3D" id="3.30.160.270">
    <property type="match status" value="1"/>
</dbReference>
<dbReference type="Gene3D" id="3.20.20.70">
    <property type="entry name" value="Aldolase class I"/>
    <property type="match status" value="1"/>
</dbReference>
<dbReference type="HAMAP" id="MF_01025">
    <property type="entry name" value="LeuA_type1"/>
    <property type="match status" value="1"/>
</dbReference>
<dbReference type="InterPro" id="IPR050073">
    <property type="entry name" value="2-IPM_HCS-like"/>
</dbReference>
<dbReference type="InterPro" id="IPR013709">
    <property type="entry name" value="2-isopropylmalate_synth_dimer"/>
</dbReference>
<dbReference type="InterPro" id="IPR002034">
    <property type="entry name" value="AIPM/Hcit_synth_CS"/>
</dbReference>
<dbReference type="InterPro" id="IPR013785">
    <property type="entry name" value="Aldolase_TIM"/>
</dbReference>
<dbReference type="InterPro" id="IPR054691">
    <property type="entry name" value="LeuA/HCS_post-cat"/>
</dbReference>
<dbReference type="InterPro" id="IPR036230">
    <property type="entry name" value="LeuA_allosteric_dom_sf"/>
</dbReference>
<dbReference type="InterPro" id="IPR005671">
    <property type="entry name" value="LeuA_bact_synth"/>
</dbReference>
<dbReference type="InterPro" id="IPR000891">
    <property type="entry name" value="PYR_CT"/>
</dbReference>
<dbReference type="NCBIfam" id="TIGR00973">
    <property type="entry name" value="leuA_bact"/>
    <property type="match status" value="1"/>
</dbReference>
<dbReference type="NCBIfam" id="NF002086">
    <property type="entry name" value="PRK00915.1-3"/>
    <property type="match status" value="1"/>
</dbReference>
<dbReference type="NCBIfam" id="NF002088">
    <property type="entry name" value="PRK00915.1-5"/>
    <property type="match status" value="1"/>
</dbReference>
<dbReference type="PANTHER" id="PTHR10277:SF9">
    <property type="entry name" value="2-ISOPROPYLMALATE SYNTHASE 1, CHLOROPLASTIC-RELATED"/>
    <property type="match status" value="1"/>
</dbReference>
<dbReference type="PANTHER" id="PTHR10277">
    <property type="entry name" value="HOMOCITRATE SYNTHASE-RELATED"/>
    <property type="match status" value="1"/>
</dbReference>
<dbReference type="Pfam" id="PF22617">
    <property type="entry name" value="HCS_D2"/>
    <property type="match status" value="1"/>
</dbReference>
<dbReference type="Pfam" id="PF00682">
    <property type="entry name" value="HMGL-like"/>
    <property type="match status" value="1"/>
</dbReference>
<dbReference type="Pfam" id="PF08502">
    <property type="entry name" value="LeuA_dimer"/>
    <property type="match status" value="1"/>
</dbReference>
<dbReference type="SMART" id="SM00917">
    <property type="entry name" value="LeuA_dimer"/>
    <property type="match status" value="1"/>
</dbReference>
<dbReference type="SUPFAM" id="SSF110921">
    <property type="entry name" value="2-isopropylmalate synthase LeuA, allosteric (dimerisation) domain"/>
    <property type="match status" value="1"/>
</dbReference>
<dbReference type="SUPFAM" id="SSF51569">
    <property type="entry name" value="Aldolase"/>
    <property type="match status" value="1"/>
</dbReference>
<dbReference type="PROSITE" id="PS00815">
    <property type="entry name" value="AIPM_HOMOCIT_SYNTH_1"/>
    <property type="match status" value="1"/>
</dbReference>
<dbReference type="PROSITE" id="PS00816">
    <property type="entry name" value="AIPM_HOMOCIT_SYNTH_2"/>
    <property type="match status" value="1"/>
</dbReference>
<dbReference type="PROSITE" id="PS50991">
    <property type="entry name" value="PYR_CT"/>
    <property type="match status" value="1"/>
</dbReference>
<accession>B9IUZ0</accession>
<feature type="chain" id="PRO_1000149133" description="2-isopropylmalate synthase">
    <location>
        <begin position="1"/>
        <end position="506"/>
    </location>
</feature>
<feature type="domain" description="Pyruvate carboxyltransferase" evidence="1">
    <location>
        <begin position="4"/>
        <end position="266"/>
    </location>
</feature>
<feature type="region of interest" description="Regulatory domain" evidence="1">
    <location>
        <begin position="390"/>
        <end position="506"/>
    </location>
</feature>
<feature type="binding site" evidence="1">
    <location>
        <position position="13"/>
    </location>
    <ligand>
        <name>Mn(2+)</name>
        <dbReference type="ChEBI" id="CHEBI:29035"/>
    </ligand>
</feature>
<feature type="binding site" evidence="1">
    <location>
        <position position="201"/>
    </location>
    <ligand>
        <name>Mn(2+)</name>
        <dbReference type="ChEBI" id="CHEBI:29035"/>
    </ligand>
</feature>
<feature type="binding site" evidence="1">
    <location>
        <position position="203"/>
    </location>
    <ligand>
        <name>Mn(2+)</name>
        <dbReference type="ChEBI" id="CHEBI:29035"/>
    </ligand>
</feature>
<feature type="binding site" evidence="1">
    <location>
        <position position="237"/>
    </location>
    <ligand>
        <name>Mn(2+)</name>
        <dbReference type="ChEBI" id="CHEBI:29035"/>
    </ligand>
</feature>
<keyword id="KW-0028">Amino-acid biosynthesis</keyword>
<keyword id="KW-0100">Branched-chain amino acid biosynthesis</keyword>
<keyword id="KW-0963">Cytoplasm</keyword>
<keyword id="KW-0432">Leucine biosynthesis</keyword>
<keyword id="KW-0464">Manganese</keyword>
<keyword id="KW-0479">Metal-binding</keyword>
<keyword id="KW-0808">Transferase</keyword>
<evidence type="ECO:0000255" key="1">
    <source>
        <dbReference type="HAMAP-Rule" id="MF_01025"/>
    </source>
</evidence>